<feature type="chain" id="PRO_0000190215" description="Synaptotagmin-like protein 3">
    <location>
        <begin position="1"/>
        <end position="607"/>
    </location>
</feature>
<feature type="domain" description="RabBD" evidence="2">
    <location>
        <begin position="4"/>
        <end position="123"/>
    </location>
</feature>
<feature type="domain" description="C2 1" evidence="1">
    <location>
        <begin position="305"/>
        <end position="430"/>
    </location>
</feature>
<feature type="domain" description="C2 2" evidence="1">
    <location>
        <begin position="458"/>
        <end position="590"/>
    </location>
</feature>
<feature type="region of interest" description="Disordered" evidence="3">
    <location>
        <begin position="221"/>
        <end position="279"/>
    </location>
</feature>
<feature type="compositionally biased region" description="Polar residues" evidence="3">
    <location>
        <begin position="230"/>
        <end position="241"/>
    </location>
</feature>
<feature type="compositionally biased region" description="Basic and acidic residues" evidence="3">
    <location>
        <begin position="248"/>
        <end position="259"/>
    </location>
</feature>
<feature type="splice variant" id="VSP_007897" description="In isoform 4." evidence="7">
    <location>
        <begin position="1"/>
        <end position="296"/>
    </location>
</feature>
<feature type="splice variant" id="VSP_007896" description="In isoform 3." evidence="6 7">
    <location>
        <begin position="1"/>
        <end position="214"/>
    </location>
</feature>
<feature type="splice variant" id="VSP_007895" description="In isoform 2." evidence="7 8">
    <location>
        <begin position="1"/>
        <end position="195"/>
    </location>
</feature>
<feature type="splice variant" id="VSP_007898" description="In isoform 5." evidence="9">
    <original>NVKI</original>
    <variation>ANGR</variation>
    <location>
        <begin position="111"/>
        <end position="114"/>
    </location>
</feature>
<feature type="splice variant" id="VSP_007899" description="In isoform 5." evidence="9">
    <location>
        <begin position="115"/>
        <end position="607"/>
    </location>
</feature>
<feature type="mutagenesis site" description="Binds phospholipids only in the absence of divalent cations." evidence="5">
    <original>EE</original>
    <variation>QQ</variation>
    <location>
        <begin position="336"/>
        <end position="337"/>
    </location>
</feature>
<feature type="mutagenesis site" description="Binds phospholipids only in the absence of divalent cations." evidence="5">
    <original>KRK</original>
    <variation>QQQ</variation>
    <location>
        <begin position="359"/>
        <end position="361"/>
    </location>
</feature>
<feature type="sequence conflict" description="In Ref. 1; BAB32653." evidence="10" ref="1">
    <original>Q</original>
    <variation>R</variation>
    <location>
        <position position="229"/>
    </location>
</feature>
<keyword id="KW-0025">Alternative splicing</keyword>
<keyword id="KW-0472">Membrane</keyword>
<keyword id="KW-1185">Reference proteome</keyword>
<keyword id="KW-0677">Repeat</keyword>
<evidence type="ECO:0000255" key="1">
    <source>
        <dbReference type="PROSITE-ProRule" id="PRU00041"/>
    </source>
</evidence>
<evidence type="ECO:0000255" key="2">
    <source>
        <dbReference type="PROSITE-ProRule" id="PRU00234"/>
    </source>
</evidence>
<evidence type="ECO:0000256" key="3">
    <source>
        <dbReference type="SAM" id="MobiDB-lite"/>
    </source>
</evidence>
<evidence type="ECO:0000269" key="4">
    <source>
    </source>
</evidence>
<evidence type="ECO:0000269" key="5">
    <source>
    </source>
</evidence>
<evidence type="ECO:0000303" key="6">
    <source>
    </source>
</evidence>
<evidence type="ECO:0000303" key="7">
    <source>
    </source>
</evidence>
<evidence type="ECO:0000303" key="8">
    <source>
    </source>
</evidence>
<evidence type="ECO:0000303" key="9">
    <source>
    </source>
</evidence>
<evidence type="ECO:0000305" key="10"/>
<accession>Q99N48</accession>
<accession>Q3KQQ0</accession>
<accession>Q8C506</accession>
<accession>Q99N47</accession>
<accession>Q99N49</accession>
<accession>Q99N54</accession>
<accession>Q99N79</accession>
<dbReference type="EMBL" id="AB050743">
    <property type="protein sequence ID" value="BAB32653.1"/>
    <property type="molecule type" value="mRNA"/>
</dbReference>
<dbReference type="EMBL" id="AB057758">
    <property type="protein sequence ID" value="BAB41086.1"/>
    <property type="molecule type" value="mRNA"/>
</dbReference>
<dbReference type="EMBL" id="AB057764">
    <property type="protein sequence ID" value="BAB41092.1"/>
    <property type="molecule type" value="mRNA"/>
</dbReference>
<dbReference type="EMBL" id="AB057765">
    <property type="protein sequence ID" value="BAB41093.1"/>
    <property type="molecule type" value="mRNA"/>
</dbReference>
<dbReference type="EMBL" id="AB057766">
    <property type="protein sequence ID" value="BAB41094.1"/>
    <property type="molecule type" value="mRNA"/>
</dbReference>
<dbReference type="EMBL" id="BC022608">
    <property type="protein sequence ID" value="AAH22608.1"/>
    <property type="molecule type" value="mRNA"/>
</dbReference>
<dbReference type="EMBL" id="BC106102">
    <property type="protein sequence ID" value="AAI06103.1"/>
    <property type="molecule type" value="mRNA"/>
</dbReference>
<dbReference type="EMBL" id="AK079850">
    <property type="protein sequence ID" value="BAC37766.1"/>
    <property type="molecule type" value="mRNA"/>
</dbReference>
<dbReference type="CCDS" id="CCDS28372.2">
    <molecule id="Q99N48-1"/>
</dbReference>
<dbReference type="CCDS" id="CCDS28374.3">
    <molecule id="Q99N48-2"/>
</dbReference>
<dbReference type="RefSeq" id="NP_113572.1">
    <molecule id="Q99N48-1"/>
    <property type="nucleotide sequence ID" value="NM_031395.3"/>
</dbReference>
<dbReference type="RefSeq" id="NP_899226.2">
    <molecule id="Q99N48-2"/>
    <property type="nucleotide sequence ID" value="NM_183370.2"/>
</dbReference>
<dbReference type="RefSeq" id="XP_006523322.1">
    <molecule id="Q99N48-1"/>
    <property type="nucleotide sequence ID" value="XM_006523259.4"/>
</dbReference>
<dbReference type="RefSeq" id="XP_006523324.1">
    <molecule id="Q99N48-2"/>
    <property type="nucleotide sequence ID" value="XM_006523261.5"/>
</dbReference>
<dbReference type="RefSeq" id="XP_006523326.1">
    <property type="nucleotide sequence ID" value="XM_006523263.1"/>
</dbReference>
<dbReference type="RefSeq" id="XP_006523327.1">
    <molecule id="Q99N48-2"/>
    <property type="nucleotide sequence ID" value="XM_006523264.2"/>
</dbReference>
<dbReference type="RefSeq" id="XP_011244483.1">
    <molecule id="Q99N48-1"/>
    <property type="nucleotide sequence ID" value="XM_011246181.4"/>
</dbReference>
<dbReference type="RefSeq" id="XP_017173221.1">
    <property type="nucleotide sequence ID" value="XM_017317732.1"/>
</dbReference>
<dbReference type="RefSeq" id="XP_036016750.1">
    <molecule id="Q99N48-2"/>
    <property type="nucleotide sequence ID" value="XM_036160857.1"/>
</dbReference>
<dbReference type="RefSeq" id="XP_036016751.1">
    <molecule id="Q99N48-2"/>
    <property type="nucleotide sequence ID" value="XM_036160858.1"/>
</dbReference>
<dbReference type="SMR" id="Q99N48"/>
<dbReference type="FunCoup" id="Q99N48">
    <property type="interactions" value="403"/>
</dbReference>
<dbReference type="IntAct" id="Q99N48">
    <property type="interactions" value="2"/>
</dbReference>
<dbReference type="STRING" id="10090.ENSMUSP00000095041"/>
<dbReference type="GlyGen" id="Q99N48">
    <property type="glycosylation" value="1 site"/>
</dbReference>
<dbReference type="iPTMnet" id="Q99N48"/>
<dbReference type="PhosphoSitePlus" id="Q99N48"/>
<dbReference type="SwissPalm" id="Q99N48"/>
<dbReference type="jPOST" id="Q99N48"/>
<dbReference type="PaxDb" id="10090-ENSMUSP00000125469"/>
<dbReference type="ProteomicsDB" id="254848">
    <molecule id="Q99N48-1"/>
</dbReference>
<dbReference type="ProteomicsDB" id="254849">
    <molecule id="Q99N48-2"/>
</dbReference>
<dbReference type="ProteomicsDB" id="254850">
    <molecule id="Q99N48-3"/>
</dbReference>
<dbReference type="ProteomicsDB" id="254851">
    <molecule id="Q99N48-4"/>
</dbReference>
<dbReference type="ProteomicsDB" id="254852">
    <molecule id="Q99N48-5"/>
</dbReference>
<dbReference type="Antibodypedia" id="33442">
    <property type="antibodies" value="107 antibodies from 19 providers"/>
</dbReference>
<dbReference type="DNASU" id="83672"/>
<dbReference type="Ensembl" id="ENSMUST00000097430.10">
    <molecule id="Q99N48-1"/>
    <property type="protein sequence ID" value="ENSMUSP00000095041.3"/>
    <property type="gene ID" value="ENSMUSG00000041831.18"/>
</dbReference>
<dbReference type="GeneID" id="83672"/>
<dbReference type="KEGG" id="mmu:83672"/>
<dbReference type="UCSC" id="uc008ahq.2">
    <molecule id="Q99N48-1"/>
    <property type="organism name" value="mouse"/>
</dbReference>
<dbReference type="AGR" id="MGI:1933367"/>
<dbReference type="CTD" id="94120"/>
<dbReference type="MGI" id="MGI:1933367">
    <property type="gene designation" value="Sytl3"/>
</dbReference>
<dbReference type="VEuPathDB" id="HostDB:ENSMUSG00000041831"/>
<dbReference type="eggNOG" id="KOG1028">
    <property type="taxonomic scope" value="Eukaryota"/>
</dbReference>
<dbReference type="GeneTree" id="ENSGT00940000160610"/>
<dbReference type="HOGENOM" id="CLU_002711_0_0_1"/>
<dbReference type="InParanoid" id="Q99N48"/>
<dbReference type="OMA" id="RKKKCNP"/>
<dbReference type="OrthoDB" id="195679at2759"/>
<dbReference type="PhylomeDB" id="Q99N48"/>
<dbReference type="BioGRID-ORCS" id="83672">
    <property type="hits" value="9 hits in 77 CRISPR screens"/>
</dbReference>
<dbReference type="ChiTaRS" id="Sytl3">
    <property type="organism name" value="mouse"/>
</dbReference>
<dbReference type="PRO" id="PR:Q99N48"/>
<dbReference type="Proteomes" id="UP000000589">
    <property type="component" value="Chromosome 17"/>
</dbReference>
<dbReference type="RNAct" id="Q99N48">
    <property type="molecule type" value="protein"/>
</dbReference>
<dbReference type="Bgee" id="ENSMUSG00000041831">
    <property type="expression patterns" value="Expressed in lumbar dorsal root ganglion and 67 other cell types or tissues"/>
</dbReference>
<dbReference type="ExpressionAtlas" id="Q99N48">
    <property type="expression patterns" value="baseline and differential"/>
</dbReference>
<dbReference type="GO" id="GO:0012505">
    <property type="term" value="C:endomembrane system"/>
    <property type="evidence" value="ECO:0007669"/>
    <property type="project" value="UniProtKB-SubCell"/>
</dbReference>
<dbReference type="GO" id="GO:0016020">
    <property type="term" value="C:membrane"/>
    <property type="evidence" value="ECO:0000314"/>
    <property type="project" value="MGI"/>
</dbReference>
<dbReference type="GO" id="GO:0005886">
    <property type="term" value="C:plasma membrane"/>
    <property type="evidence" value="ECO:0000314"/>
    <property type="project" value="UniProtKB"/>
</dbReference>
<dbReference type="GO" id="GO:0005544">
    <property type="term" value="F:calcium-dependent phospholipid binding"/>
    <property type="evidence" value="ECO:0000314"/>
    <property type="project" value="UniProtKB"/>
</dbReference>
<dbReference type="GO" id="GO:0042043">
    <property type="term" value="F:neurexin family protein binding"/>
    <property type="evidence" value="ECO:0000314"/>
    <property type="project" value="UniProtKB"/>
</dbReference>
<dbReference type="GO" id="GO:0005543">
    <property type="term" value="F:phospholipid binding"/>
    <property type="evidence" value="ECO:0000314"/>
    <property type="project" value="MGI"/>
</dbReference>
<dbReference type="GO" id="GO:0031267">
    <property type="term" value="F:small GTPase binding"/>
    <property type="evidence" value="ECO:0007669"/>
    <property type="project" value="InterPro"/>
</dbReference>
<dbReference type="GO" id="GO:0008270">
    <property type="term" value="F:zinc ion binding"/>
    <property type="evidence" value="ECO:0000303"/>
    <property type="project" value="UniProtKB"/>
</dbReference>
<dbReference type="GO" id="GO:0006887">
    <property type="term" value="P:exocytosis"/>
    <property type="evidence" value="ECO:0000314"/>
    <property type="project" value="MGI"/>
</dbReference>
<dbReference type="GO" id="GO:0006886">
    <property type="term" value="P:intracellular protein transport"/>
    <property type="evidence" value="ECO:0007669"/>
    <property type="project" value="InterPro"/>
</dbReference>
<dbReference type="CDD" id="cd04020">
    <property type="entry name" value="C2B_SLP_1-2-3-4"/>
    <property type="match status" value="1"/>
</dbReference>
<dbReference type="FunFam" id="2.60.40.150:FF:000152">
    <property type="entry name" value="Synaptotagmin like 3"/>
    <property type="match status" value="1"/>
</dbReference>
<dbReference type="FunFam" id="2.60.40.150:FF:000006">
    <property type="entry name" value="Synaptotagmin-like 5, isoform CRA_a"/>
    <property type="match status" value="1"/>
</dbReference>
<dbReference type="FunFam" id="3.30.40.10:FF:000018">
    <property type="entry name" value="Synaptotagmin-like 5, isoform CRA_a"/>
    <property type="match status" value="1"/>
</dbReference>
<dbReference type="Gene3D" id="2.60.40.150">
    <property type="entry name" value="C2 domain"/>
    <property type="match status" value="2"/>
</dbReference>
<dbReference type="Gene3D" id="3.30.40.10">
    <property type="entry name" value="Zinc/RING finger domain, C3HC4 (zinc finger)"/>
    <property type="match status" value="1"/>
</dbReference>
<dbReference type="InterPro" id="IPR000008">
    <property type="entry name" value="C2_dom"/>
</dbReference>
<dbReference type="InterPro" id="IPR035892">
    <property type="entry name" value="C2_domain_sf"/>
</dbReference>
<dbReference type="InterPro" id="IPR041282">
    <property type="entry name" value="FYVE_2"/>
</dbReference>
<dbReference type="InterPro" id="IPR010911">
    <property type="entry name" value="Rab_BD"/>
</dbReference>
<dbReference type="InterPro" id="IPR043567">
    <property type="entry name" value="SYTL1-5_C2B"/>
</dbReference>
<dbReference type="InterPro" id="IPR011011">
    <property type="entry name" value="Znf_FYVE_PHD"/>
</dbReference>
<dbReference type="InterPro" id="IPR013083">
    <property type="entry name" value="Znf_RING/FYVE/PHD"/>
</dbReference>
<dbReference type="PANTHER" id="PTHR45716">
    <property type="entry name" value="BITESIZE, ISOFORM I"/>
    <property type="match status" value="1"/>
</dbReference>
<dbReference type="PANTHER" id="PTHR45716:SF2">
    <property type="entry name" value="BITESIZE, ISOFORM I"/>
    <property type="match status" value="1"/>
</dbReference>
<dbReference type="Pfam" id="PF00168">
    <property type="entry name" value="C2"/>
    <property type="match status" value="2"/>
</dbReference>
<dbReference type="Pfam" id="PF02318">
    <property type="entry name" value="FYVE_2"/>
    <property type="match status" value="1"/>
</dbReference>
<dbReference type="SMART" id="SM00239">
    <property type="entry name" value="C2"/>
    <property type="match status" value="2"/>
</dbReference>
<dbReference type="SUPFAM" id="SSF49562">
    <property type="entry name" value="C2 domain (Calcium/lipid-binding domain, CaLB)"/>
    <property type="match status" value="2"/>
</dbReference>
<dbReference type="SUPFAM" id="SSF57903">
    <property type="entry name" value="FYVE/PHD zinc finger"/>
    <property type="match status" value="1"/>
</dbReference>
<dbReference type="PROSITE" id="PS50004">
    <property type="entry name" value="C2"/>
    <property type="match status" value="2"/>
</dbReference>
<dbReference type="PROSITE" id="PS50916">
    <property type="entry name" value="RABBD"/>
    <property type="match status" value="1"/>
</dbReference>
<comment type="function">
    <text>May act as Rab effector protein and play a role in vesicle trafficking. Binds phospholipids in the presence of calcium ions.</text>
</comment>
<comment type="subunit">
    <text>Monomer. Binds NRXN1. Binds RAB27A that has been activated by GTP-binding via its N-terminus.</text>
</comment>
<comment type="subcellular location">
    <subcellularLocation>
        <location>Endomembrane system</location>
        <topology>Peripheral membrane protein</topology>
    </subcellularLocation>
</comment>
<comment type="alternative products">
    <event type="alternative splicing"/>
    <isoform>
        <id>Q99N48-1</id>
        <name>1</name>
        <name>Slp3-a</name>
        <sequence type="displayed"/>
    </isoform>
    <isoform>
        <id>Q99N48-2</id>
        <name>2</name>
        <name>Slp3-a + 3S-I</name>
        <sequence type="described" ref="VSP_007895"/>
    </isoform>
    <isoform>
        <id>Q99N48-3</id>
        <name>3</name>
        <name>Slp3-b</name>
        <name>Slp3-a delta 3S-II</name>
        <sequence type="described" ref="VSP_007896"/>
    </isoform>
    <isoform>
        <id>Q99N48-4</id>
        <name>4</name>
        <name>Slp3-b + 3S-III</name>
        <sequence type="described" ref="VSP_007897"/>
    </isoform>
    <isoform>
        <id>Q99N48-5</id>
        <name>5</name>
        <sequence type="described" ref="VSP_007898 VSP_007899"/>
    </isoform>
</comment>
<comment type="tissue specificity">
    <text evidence="4">Highly expressed in spleen and lung. Detected at lower levels in heart and testis.</text>
</comment>
<organism>
    <name type="scientific">Mus musculus</name>
    <name type="common">Mouse</name>
    <dbReference type="NCBI Taxonomy" id="10090"/>
    <lineage>
        <taxon>Eukaryota</taxon>
        <taxon>Metazoa</taxon>
        <taxon>Chordata</taxon>
        <taxon>Craniata</taxon>
        <taxon>Vertebrata</taxon>
        <taxon>Euteleostomi</taxon>
        <taxon>Mammalia</taxon>
        <taxon>Eutheria</taxon>
        <taxon>Euarchontoglires</taxon>
        <taxon>Glires</taxon>
        <taxon>Rodentia</taxon>
        <taxon>Myomorpha</taxon>
        <taxon>Muroidea</taxon>
        <taxon>Muridae</taxon>
        <taxon>Murinae</taxon>
        <taxon>Mus</taxon>
        <taxon>Mus</taxon>
    </lineage>
</organism>
<gene>
    <name type="primary">Sytl3</name>
    <name type="synonym">Slp3</name>
</gene>
<reference key="1">
    <citation type="journal article" date="2001" name="Biochem. Biophys. Res. Commun.">
        <title>Synaptotagmin-like protein 1-3: a novel family of C-terminal-type tandem C2 proteins.</title>
        <authorList>
            <person name="Fukuda M."/>
            <person name="Mikoshiba K."/>
        </authorList>
    </citation>
    <scope>NUCLEOTIDE SEQUENCE [MRNA] (ISOFORM 3)</scope>
    <scope>INTERACTION WITH PHOSPHOLIPIDS</scope>
    <scope>SUBCELLULAR LOCATION</scope>
    <scope>INTERACTION WITH NRXN1</scope>
    <source>
        <strain>BALB/cJ</strain>
        <tissue>Brain</tissue>
    </source>
</reference>
<reference key="2">
    <citation type="journal article" date="2001" name="Biochem. Biophys. Res. Commun.">
        <title>Novel splicing isoforms of synaptotagmin-like proteins 2 and 3: identification of the Slp homology domain.</title>
        <authorList>
            <person name="Fukuda M."/>
            <person name="Saegusa C."/>
            <person name="Mikoshiba K."/>
        </authorList>
    </citation>
    <scope>NUCLEOTIDE SEQUENCE [MRNA] (ISOFORMS 1; 2; 3 AND 4)</scope>
    <scope>TISSUE SPECIFICITY</scope>
    <source>
        <strain>BALB/cJ</strain>
        <tissue>Brain</tissue>
    </source>
</reference>
<reference key="3">
    <citation type="journal article" date="2004" name="Genome Res.">
        <title>The status, quality, and expansion of the NIH full-length cDNA project: the Mammalian Gene Collection (MGC).</title>
        <authorList>
            <consortium name="The MGC Project Team"/>
        </authorList>
    </citation>
    <scope>NUCLEOTIDE SEQUENCE [LARGE SCALE MRNA] (ISOFORM 2)</scope>
    <source>
        <strain>FVB/N</strain>
        <tissue>Mammary gland</tissue>
        <tissue>Salivary gland</tissue>
    </source>
</reference>
<reference key="4">
    <citation type="journal article" date="2005" name="Science">
        <title>The transcriptional landscape of the mammalian genome.</title>
        <authorList>
            <person name="Carninci P."/>
            <person name="Kasukawa T."/>
            <person name="Katayama S."/>
            <person name="Gough J."/>
            <person name="Frith M.C."/>
            <person name="Maeda N."/>
            <person name="Oyama R."/>
            <person name="Ravasi T."/>
            <person name="Lenhard B."/>
            <person name="Wells C."/>
            <person name="Kodzius R."/>
            <person name="Shimokawa K."/>
            <person name="Bajic V.B."/>
            <person name="Brenner S.E."/>
            <person name="Batalov S."/>
            <person name="Forrest A.R."/>
            <person name="Zavolan M."/>
            <person name="Davis M.J."/>
            <person name="Wilming L.G."/>
            <person name="Aidinis V."/>
            <person name="Allen J.E."/>
            <person name="Ambesi-Impiombato A."/>
            <person name="Apweiler R."/>
            <person name="Aturaliya R.N."/>
            <person name="Bailey T.L."/>
            <person name="Bansal M."/>
            <person name="Baxter L."/>
            <person name="Beisel K.W."/>
            <person name="Bersano T."/>
            <person name="Bono H."/>
            <person name="Chalk A.M."/>
            <person name="Chiu K.P."/>
            <person name="Choudhary V."/>
            <person name="Christoffels A."/>
            <person name="Clutterbuck D.R."/>
            <person name="Crowe M.L."/>
            <person name="Dalla E."/>
            <person name="Dalrymple B.P."/>
            <person name="de Bono B."/>
            <person name="Della Gatta G."/>
            <person name="di Bernardo D."/>
            <person name="Down T."/>
            <person name="Engstrom P."/>
            <person name="Fagiolini M."/>
            <person name="Faulkner G."/>
            <person name="Fletcher C.F."/>
            <person name="Fukushima T."/>
            <person name="Furuno M."/>
            <person name="Futaki S."/>
            <person name="Gariboldi M."/>
            <person name="Georgii-Hemming P."/>
            <person name="Gingeras T.R."/>
            <person name="Gojobori T."/>
            <person name="Green R.E."/>
            <person name="Gustincich S."/>
            <person name="Harbers M."/>
            <person name="Hayashi Y."/>
            <person name="Hensch T.K."/>
            <person name="Hirokawa N."/>
            <person name="Hill D."/>
            <person name="Huminiecki L."/>
            <person name="Iacono M."/>
            <person name="Ikeo K."/>
            <person name="Iwama A."/>
            <person name="Ishikawa T."/>
            <person name="Jakt M."/>
            <person name="Kanapin A."/>
            <person name="Katoh M."/>
            <person name="Kawasawa Y."/>
            <person name="Kelso J."/>
            <person name="Kitamura H."/>
            <person name="Kitano H."/>
            <person name="Kollias G."/>
            <person name="Krishnan S.P."/>
            <person name="Kruger A."/>
            <person name="Kummerfeld S.K."/>
            <person name="Kurochkin I.V."/>
            <person name="Lareau L.F."/>
            <person name="Lazarevic D."/>
            <person name="Lipovich L."/>
            <person name="Liu J."/>
            <person name="Liuni S."/>
            <person name="McWilliam S."/>
            <person name="Madan Babu M."/>
            <person name="Madera M."/>
            <person name="Marchionni L."/>
            <person name="Matsuda H."/>
            <person name="Matsuzawa S."/>
            <person name="Miki H."/>
            <person name="Mignone F."/>
            <person name="Miyake S."/>
            <person name="Morris K."/>
            <person name="Mottagui-Tabar S."/>
            <person name="Mulder N."/>
            <person name="Nakano N."/>
            <person name="Nakauchi H."/>
            <person name="Ng P."/>
            <person name="Nilsson R."/>
            <person name="Nishiguchi S."/>
            <person name="Nishikawa S."/>
            <person name="Nori F."/>
            <person name="Ohara O."/>
            <person name="Okazaki Y."/>
            <person name="Orlando V."/>
            <person name="Pang K.C."/>
            <person name="Pavan W.J."/>
            <person name="Pavesi G."/>
            <person name="Pesole G."/>
            <person name="Petrovsky N."/>
            <person name="Piazza S."/>
            <person name="Reed J."/>
            <person name="Reid J.F."/>
            <person name="Ring B.Z."/>
            <person name="Ringwald M."/>
            <person name="Rost B."/>
            <person name="Ruan Y."/>
            <person name="Salzberg S.L."/>
            <person name="Sandelin A."/>
            <person name="Schneider C."/>
            <person name="Schoenbach C."/>
            <person name="Sekiguchi K."/>
            <person name="Semple C.A."/>
            <person name="Seno S."/>
            <person name="Sessa L."/>
            <person name="Sheng Y."/>
            <person name="Shibata Y."/>
            <person name="Shimada H."/>
            <person name="Shimada K."/>
            <person name="Silva D."/>
            <person name="Sinclair B."/>
            <person name="Sperling S."/>
            <person name="Stupka E."/>
            <person name="Sugiura K."/>
            <person name="Sultana R."/>
            <person name="Takenaka Y."/>
            <person name="Taki K."/>
            <person name="Tammoja K."/>
            <person name="Tan S.L."/>
            <person name="Tang S."/>
            <person name="Taylor M.S."/>
            <person name="Tegner J."/>
            <person name="Teichmann S.A."/>
            <person name="Ueda H.R."/>
            <person name="van Nimwegen E."/>
            <person name="Verardo R."/>
            <person name="Wei C.L."/>
            <person name="Yagi K."/>
            <person name="Yamanishi H."/>
            <person name="Zabarovsky E."/>
            <person name="Zhu S."/>
            <person name="Zimmer A."/>
            <person name="Hide W."/>
            <person name="Bult C."/>
            <person name="Grimmond S.M."/>
            <person name="Teasdale R.D."/>
            <person name="Liu E.T."/>
            <person name="Brusic V."/>
            <person name="Quackenbush J."/>
            <person name="Wahlestedt C."/>
            <person name="Mattick J.S."/>
            <person name="Hume D.A."/>
            <person name="Kai C."/>
            <person name="Sasaki D."/>
            <person name="Tomaru Y."/>
            <person name="Fukuda S."/>
            <person name="Kanamori-Katayama M."/>
            <person name="Suzuki M."/>
            <person name="Aoki J."/>
            <person name="Arakawa T."/>
            <person name="Iida J."/>
            <person name="Imamura K."/>
            <person name="Itoh M."/>
            <person name="Kato T."/>
            <person name="Kawaji H."/>
            <person name="Kawagashira N."/>
            <person name="Kawashima T."/>
            <person name="Kojima M."/>
            <person name="Kondo S."/>
            <person name="Konno H."/>
            <person name="Nakano K."/>
            <person name="Ninomiya N."/>
            <person name="Nishio T."/>
            <person name="Okada M."/>
            <person name="Plessy C."/>
            <person name="Shibata K."/>
            <person name="Shiraki T."/>
            <person name="Suzuki S."/>
            <person name="Tagami M."/>
            <person name="Waki K."/>
            <person name="Watahiki A."/>
            <person name="Okamura-Oho Y."/>
            <person name="Suzuki H."/>
            <person name="Kawai J."/>
            <person name="Hayashizaki Y."/>
        </authorList>
    </citation>
    <scope>NUCLEOTIDE SEQUENCE [LARGE SCALE MRNA] (ISOFORM 5)</scope>
    <source>
        <strain>C57BL/6J</strain>
        <tissue>Thymus</tissue>
    </source>
</reference>
<reference key="5">
    <citation type="journal article" date="2002" name="Biochem. J.">
        <title>The C2A domain of synaptotagmin-like protein 3 (Slp3) is an atypical calcium-dependent phospholipid-binding machine: comparison with the C2A domain of synaptotagmin I.</title>
        <authorList>
            <person name="Fukuda M."/>
        </authorList>
    </citation>
    <scope>MUTAGENESIS OF 336-GLU-GLU-337 AND 359-LYS--LYS-361</scope>
    <scope>INTERACTION WITH PHOSPHOLIPIDS</scope>
</reference>
<reference key="6">
    <citation type="journal article" date="2002" name="J. Biol. Chem.">
        <title>The Slp homology domain of synaptotagmin-like proteins 1-4 and Slac2 functions as a novel Rab27A binding domain.</title>
        <authorList>
            <person name="Kuroda T.S."/>
            <person name="Fukuda M."/>
            <person name="Ariga H."/>
            <person name="Mikoshiba K."/>
        </authorList>
    </citation>
    <scope>INTERACTION WITH RAB27A</scope>
</reference>
<protein>
    <recommendedName>
        <fullName>Synaptotagmin-like protein 3</fullName>
    </recommendedName>
    <alternativeName>
        <fullName>Exophilin-6</fullName>
    </alternativeName>
</protein>
<name>SYTL3_MOUSE</name>
<proteinExistence type="evidence at protein level"/>
<sequence>MAHEVDLESFKELERDIILRVLYRDQTVQSTEEERVRKLKSHLQHLRWKGAKSSSQEYKEKCCARCQRALGLLLNRGAVCQGCSHRVCSECRVFLRRTRAWKCTVCFEDRNVKIKTGEWFFEERARKFPTAGRRETAGAKLLQSYQRLSKISVVPPTPPPFSESQCSSSSRLQELGHFRGFNKSVENLFLSVTTQMRKLSKSQNDMTSEKHLLAMDPRQCVGHTERRSQSDTAVNVTSRKASTPDILKAFHQEDPKHPPDPVLKQDTPPSSPTHSAVFSGGLRHGSLISINSTCTEMGNFDNANVTGEIEFAIHYCVKSCSLEICIKTCKNLAYGEEKKRKCNPYVKTYLLPDRSSQGKRKTRVQKNTLDPTFEETLKYQVDPGQLMTRRLQVSVWHLGTLARRVFLGEVILPLAMWDFKDSTAQNARWYPLRAKAEKYEENIPQNNGELAVRAKLVLPAGPRKPQEAQEGQLALNGQLCLVVLGAKNLPVRSDGTLNSFVKGCLTLPNQQKLRVKSPVLKKQACPQWKHSFVFNGVSSSQLRQSTLELTVWDQAIFGMNDRLLGEARLGSKGGAAGCPDSGSQSKLQWHRVLSSPNLWTDMTLVLH</sequence>